<name>Y498_PASMU</name>
<protein>
    <recommendedName>
        <fullName>Uncharacterized protein PM0498</fullName>
    </recommendedName>
</protein>
<reference key="1">
    <citation type="journal article" date="2001" name="Proc. Natl. Acad. Sci. U.S.A.">
        <title>Complete genomic sequence of Pasteurella multocida Pm70.</title>
        <authorList>
            <person name="May B.J."/>
            <person name="Zhang Q."/>
            <person name="Li L.L."/>
            <person name="Paustian M.L."/>
            <person name="Whittam T.S."/>
            <person name="Kapur V."/>
        </authorList>
    </citation>
    <scope>NUCLEOTIDE SEQUENCE [LARGE SCALE GENOMIC DNA]</scope>
    <source>
        <strain>Pm70</strain>
    </source>
</reference>
<accession>Q9CND4</accession>
<organism>
    <name type="scientific">Pasteurella multocida (strain Pm70)</name>
    <dbReference type="NCBI Taxonomy" id="272843"/>
    <lineage>
        <taxon>Bacteria</taxon>
        <taxon>Pseudomonadati</taxon>
        <taxon>Pseudomonadota</taxon>
        <taxon>Gammaproteobacteria</taxon>
        <taxon>Pasteurellales</taxon>
        <taxon>Pasteurellaceae</taxon>
        <taxon>Pasteurella</taxon>
    </lineage>
</organism>
<dbReference type="EMBL" id="AE004439">
    <property type="protein sequence ID" value="AAK02582.1"/>
    <property type="molecule type" value="Genomic_DNA"/>
</dbReference>
<dbReference type="RefSeq" id="WP_010906686.1">
    <property type="nucleotide sequence ID" value="NC_002663.1"/>
</dbReference>
<dbReference type="STRING" id="272843.PM0498"/>
<dbReference type="EnsemblBacteria" id="AAK02582">
    <property type="protein sequence ID" value="AAK02582"/>
    <property type="gene ID" value="PM0498"/>
</dbReference>
<dbReference type="KEGG" id="pmu:PM0498"/>
<dbReference type="HOGENOM" id="CLU_1667719_0_0_6"/>
<dbReference type="OrthoDB" id="1075158at2"/>
<dbReference type="Proteomes" id="UP000000809">
    <property type="component" value="Chromosome"/>
</dbReference>
<proteinExistence type="predicted"/>
<keyword id="KW-1185">Reference proteome</keyword>
<sequence length="158" mass="18551">MIYINQLMENEINKENNNIKRSVISSDLLDLLDFVNVDGCLFFKFQKIDNNISTVDLNDVSRQFLDLSGYELSINRFHIDDYVSNNILCQSILFLGEFKRKWQKIYPDIKCVVIITFQNDDVGRFSTFTFHKVRDGESVFELYEINNIAQAILVEFIN</sequence>
<feature type="chain" id="PRO_0000216296" description="Uncharacterized protein PM0498">
    <location>
        <begin position="1"/>
        <end position="158"/>
    </location>
</feature>
<gene>
    <name type="ordered locus">PM0498</name>
</gene>